<sequence length="316" mass="34513">MQILLANPRGFCAGVDRAISIVENALAIYGAPIYVRHEVVHNRYVVDSLRQRGAIFIEQISEVPDGAILIFSAHGVSQAVRNEAKSRDLTVFDATCPLVTKVHMEVARASRRGEESILIGHAGHPEVEGTMGQYSNPEGGMYLVESPEDVWTLNVKNEGKLSFMTQTTLSVDDTSDVIDALRKRFPKIVGPRKDDICYATTNRQEAVRALAEQADVVLVVGSKNSSNSNRLAELAQRMGRTAFLIDDAADIQEAWVKDAACVGVTAGASAPDILVQNVIARLREFGGGEAVTLEGREENIVFEVPKELRVDVREVE</sequence>
<gene>
    <name evidence="1" type="primary">ispH</name>
    <name type="synonym">lytB</name>
    <name type="ordered locus">STY0058</name>
    <name type="ordered locus">t0051</name>
</gene>
<evidence type="ECO:0000255" key="1">
    <source>
        <dbReference type="HAMAP-Rule" id="MF_00191"/>
    </source>
</evidence>
<reference key="1">
    <citation type="journal article" date="2001" name="Nature">
        <title>Complete genome sequence of a multiple drug resistant Salmonella enterica serovar Typhi CT18.</title>
        <authorList>
            <person name="Parkhill J."/>
            <person name="Dougan G."/>
            <person name="James K.D."/>
            <person name="Thomson N.R."/>
            <person name="Pickard D."/>
            <person name="Wain J."/>
            <person name="Churcher C.M."/>
            <person name="Mungall K.L."/>
            <person name="Bentley S.D."/>
            <person name="Holden M.T.G."/>
            <person name="Sebaihia M."/>
            <person name="Baker S."/>
            <person name="Basham D."/>
            <person name="Brooks K."/>
            <person name="Chillingworth T."/>
            <person name="Connerton P."/>
            <person name="Cronin A."/>
            <person name="Davis P."/>
            <person name="Davies R.M."/>
            <person name="Dowd L."/>
            <person name="White N."/>
            <person name="Farrar J."/>
            <person name="Feltwell T."/>
            <person name="Hamlin N."/>
            <person name="Haque A."/>
            <person name="Hien T.T."/>
            <person name="Holroyd S."/>
            <person name="Jagels K."/>
            <person name="Krogh A."/>
            <person name="Larsen T.S."/>
            <person name="Leather S."/>
            <person name="Moule S."/>
            <person name="O'Gaora P."/>
            <person name="Parry C."/>
            <person name="Quail M.A."/>
            <person name="Rutherford K.M."/>
            <person name="Simmonds M."/>
            <person name="Skelton J."/>
            <person name="Stevens K."/>
            <person name="Whitehead S."/>
            <person name="Barrell B.G."/>
        </authorList>
    </citation>
    <scope>NUCLEOTIDE SEQUENCE [LARGE SCALE GENOMIC DNA]</scope>
    <source>
        <strain>CT18</strain>
    </source>
</reference>
<reference key="2">
    <citation type="journal article" date="2003" name="J. Bacteriol.">
        <title>Comparative genomics of Salmonella enterica serovar Typhi strains Ty2 and CT18.</title>
        <authorList>
            <person name="Deng W."/>
            <person name="Liou S.-R."/>
            <person name="Plunkett G. III"/>
            <person name="Mayhew G.F."/>
            <person name="Rose D.J."/>
            <person name="Burland V."/>
            <person name="Kodoyianni V."/>
            <person name="Schwartz D.C."/>
            <person name="Blattner F.R."/>
        </authorList>
    </citation>
    <scope>NUCLEOTIDE SEQUENCE [LARGE SCALE GENOMIC DNA]</scope>
    <source>
        <strain>ATCC 700931 / Ty2</strain>
    </source>
</reference>
<organism>
    <name type="scientific">Salmonella typhi</name>
    <dbReference type="NCBI Taxonomy" id="90370"/>
    <lineage>
        <taxon>Bacteria</taxon>
        <taxon>Pseudomonadati</taxon>
        <taxon>Pseudomonadota</taxon>
        <taxon>Gammaproteobacteria</taxon>
        <taxon>Enterobacterales</taxon>
        <taxon>Enterobacteriaceae</taxon>
        <taxon>Salmonella</taxon>
    </lineage>
</organism>
<comment type="function">
    <text evidence="1">Catalyzes the conversion of 1-hydroxy-2-methyl-2-(E)-butenyl 4-diphosphate (HMBPP) into a mixture of isopentenyl diphosphate (IPP) and dimethylallyl diphosphate (DMAPP). Acts in the terminal step of the DOXP/MEP pathway for isoprenoid precursor biosynthesis.</text>
</comment>
<comment type="catalytic activity">
    <reaction evidence="1">
        <text>isopentenyl diphosphate + 2 oxidized [2Fe-2S]-[ferredoxin] + H2O = (2E)-4-hydroxy-3-methylbut-2-enyl diphosphate + 2 reduced [2Fe-2S]-[ferredoxin] + 2 H(+)</text>
        <dbReference type="Rhea" id="RHEA:24488"/>
        <dbReference type="Rhea" id="RHEA-COMP:10000"/>
        <dbReference type="Rhea" id="RHEA-COMP:10001"/>
        <dbReference type="ChEBI" id="CHEBI:15377"/>
        <dbReference type="ChEBI" id="CHEBI:15378"/>
        <dbReference type="ChEBI" id="CHEBI:33737"/>
        <dbReference type="ChEBI" id="CHEBI:33738"/>
        <dbReference type="ChEBI" id="CHEBI:128753"/>
        <dbReference type="ChEBI" id="CHEBI:128769"/>
        <dbReference type="EC" id="1.17.7.4"/>
    </reaction>
</comment>
<comment type="catalytic activity">
    <reaction evidence="1">
        <text>dimethylallyl diphosphate + 2 oxidized [2Fe-2S]-[ferredoxin] + H2O = (2E)-4-hydroxy-3-methylbut-2-enyl diphosphate + 2 reduced [2Fe-2S]-[ferredoxin] + 2 H(+)</text>
        <dbReference type="Rhea" id="RHEA:24825"/>
        <dbReference type="Rhea" id="RHEA-COMP:10000"/>
        <dbReference type="Rhea" id="RHEA-COMP:10001"/>
        <dbReference type="ChEBI" id="CHEBI:15377"/>
        <dbReference type="ChEBI" id="CHEBI:15378"/>
        <dbReference type="ChEBI" id="CHEBI:33737"/>
        <dbReference type="ChEBI" id="CHEBI:33738"/>
        <dbReference type="ChEBI" id="CHEBI:57623"/>
        <dbReference type="ChEBI" id="CHEBI:128753"/>
        <dbReference type="EC" id="1.17.7.4"/>
    </reaction>
</comment>
<comment type="cofactor">
    <cofactor evidence="1">
        <name>[4Fe-4S] cluster</name>
        <dbReference type="ChEBI" id="CHEBI:49883"/>
    </cofactor>
    <text evidence="1">Binds 1 [4Fe-4S] cluster per subunit.</text>
</comment>
<comment type="pathway">
    <text evidence="1">Isoprenoid biosynthesis; dimethylallyl diphosphate biosynthesis; dimethylallyl diphosphate from (2E)-4-hydroxy-3-methylbutenyl diphosphate: step 1/1.</text>
</comment>
<comment type="pathway">
    <text evidence="1">Isoprenoid biosynthesis; isopentenyl diphosphate biosynthesis via DXP pathway; isopentenyl diphosphate from 1-deoxy-D-xylulose 5-phosphate: step 6/6.</text>
</comment>
<comment type="subunit">
    <text evidence="1">Homodimer.</text>
</comment>
<comment type="similarity">
    <text evidence="1">Belongs to the IspH family.</text>
</comment>
<name>ISPH_SALTI</name>
<keyword id="KW-0004">4Fe-4S</keyword>
<keyword id="KW-0408">Iron</keyword>
<keyword id="KW-0411">Iron-sulfur</keyword>
<keyword id="KW-0414">Isoprene biosynthesis</keyword>
<keyword id="KW-0479">Metal-binding</keyword>
<keyword id="KW-0560">Oxidoreductase</keyword>
<feature type="chain" id="PRO_0000128869" description="4-hydroxy-3-methylbut-2-enyl diphosphate reductase">
    <location>
        <begin position="1"/>
        <end position="316"/>
    </location>
</feature>
<feature type="active site" description="Proton donor" evidence="1">
    <location>
        <position position="126"/>
    </location>
</feature>
<feature type="binding site" evidence="1">
    <location>
        <position position="12"/>
    </location>
    <ligand>
        <name>[4Fe-4S] cluster</name>
        <dbReference type="ChEBI" id="CHEBI:49883"/>
    </ligand>
</feature>
<feature type="binding site" evidence="1">
    <location>
        <position position="41"/>
    </location>
    <ligand>
        <name>(2E)-4-hydroxy-3-methylbut-2-enyl diphosphate</name>
        <dbReference type="ChEBI" id="CHEBI:128753"/>
    </ligand>
</feature>
<feature type="binding site" evidence="1">
    <location>
        <position position="41"/>
    </location>
    <ligand>
        <name>dimethylallyl diphosphate</name>
        <dbReference type="ChEBI" id="CHEBI:57623"/>
    </ligand>
</feature>
<feature type="binding site" evidence="1">
    <location>
        <position position="41"/>
    </location>
    <ligand>
        <name>isopentenyl diphosphate</name>
        <dbReference type="ChEBI" id="CHEBI:128769"/>
    </ligand>
</feature>
<feature type="binding site" evidence="1">
    <location>
        <position position="74"/>
    </location>
    <ligand>
        <name>(2E)-4-hydroxy-3-methylbut-2-enyl diphosphate</name>
        <dbReference type="ChEBI" id="CHEBI:128753"/>
    </ligand>
</feature>
<feature type="binding site" evidence="1">
    <location>
        <position position="74"/>
    </location>
    <ligand>
        <name>dimethylallyl diphosphate</name>
        <dbReference type="ChEBI" id="CHEBI:57623"/>
    </ligand>
</feature>
<feature type="binding site" evidence="1">
    <location>
        <position position="74"/>
    </location>
    <ligand>
        <name>isopentenyl diphosphate</name>
        <dbReference type="ChEBI" id="CHEBI:128769"/>
    </ligand>
</feature>
<feature type="binding site" evidence="1">
    <location>
        <position position="96"/>
    </location>
    <ligand>
        <name>[4Fe-4S] cluster</name>
        <dbReference type="ChEBI" id="CHEBI:49883"/>
    </ligand>
</feature>
<feature type="binding site" evidence="1">
    <location>
        <position position="124"/>
    </location>
    <ligand>
        <name>(2E)-4-hydroxy-3-methylbut-2-enyl diphosphate</name>
        <dbReference type="ChEBI" id="CHEBI:128753"/>
    </ligand>
</feature>
<feature type="binding site" evidence="1">
    <location>
        <position position="124"/>
    </location>
    <ligand>
        <name>dimethylallyl diphosphate</name>
        <dbReference type="ChEBI" id="CHEBI:57623"/>
    </ligand>
</feature>
<feature type="binding site" evidence="1">
    <location>
        <position position="124"/>
    </location>
    <ligand>
        <name>isopentenyl diphosphate</name>
        <dbReference type="ChEBI" id="CHEBI:128769"/>
    </ligand>
</feature>
<feature type="binding site" evidence="1">
    <location>
        <position position="167"/>
    </location>
    <ligand>
        <name>(2E)-4-hydroxy-3-methylbut-2-enyl diphosphate</name>
        <dbReference type="ChEBI" id="CHEBI:128753"/>
    </ligand>
</feature>
<feature type="binding site" evidence="1">
    <location>
        <position position="197"/>
    </location>
    <ligand>
        <name>[4Fe-4S] cluster</name>
        <dbReference type="ChEBI" id="CHEBI:49883"/>
    </ligand>
</feature>
<feature type="binding site" evidence="1">
    <location>
        <position position="225"/>
    </location>
    <ligand>
        <name>(2E)-4-hydroxy-3-methylbut-2-enyl diphosphate</name>
        <dbReference type="ChEBI" id="CHEBI:128753"/>
    </ligand>
</feature>
<feature type="binding site" evidence="1">
    <location>
        <position position="225"/>
    </location>
    <ligand>
        <name>dimethylallyl diphosphate</name>
        <dbReference type="ChEBI" id="CHEBI:57623"/>
    </ligand>
</feature>
<feature type="binding site" evidence="1">
    <location>
        <position position="225"/>
    </location>
    <ligand>
        <name>isopentenyl diphosphate</name>
        <dbReference type="ChEBI" id="CHEBI:128769"/>
    </ligand>
</feature>
<feature type="binding site" evidence="1">
    <location>
        <position position="226"/>
    </location>
    <ligand>
        <name>(2E)-4-hydroxy-3-methylbut-2-enyl diphosphate</name>
        <dbReference type="ChEBI" id="CHEBI:128753"/>
    </ligand>
</feature>
<feature type="binding site" evidence="1">
    <location>
        <position position="226"/>
    </location>
    <ligand>
        <name>dimethylallyl diphosphate</name>
        <dbReference type="ChEBI" id="CHEBI:57623"/>
    </ligand>
</feature>
<feature type="binding site" evidence="1">
    <location>
        <position position="226"/>
    </location>
    <ligand>
        <name>isopentenyl diphosphate</name>
        <dbReference type="ChEBI" id="CHEBI:128769"/>
    </ligand>
</feature>
<feature type="binding site" evidence="1">
    <location>
        <position position="227"/>
    </location>
    <ligand>
        <name>(2E)-4-hydroxy-3-methylbut-2-enyl diphosphate</name>
        <dbReference type="ChEBI" id="CHEBI:128753"/>
    </ligand>
</feature>
<feature type="binding site" evidence="1">
    <location>
        <position position="227"/>
    </location>
    <ligand>
        <name>dimethylallyl diphosphate</name>
        <dbReference type="ChEBI" id="CHEBI:57623"/>
    </ligand>
</feature>
<feature type="binding site" evidence="1">
    <location>
        <position position="227"/>
    </location>
    <ligand>
        <name>isopentenyl diphosphate</name>
        <dbReference type="ChEBI" id="CHEBI:128769"/>
    </ligand>
</feature>
<feature type="binding site" evidence="1">
    <location>
        <position position="269"/>
    </location>
    <ligand>
        <name>(2E)-4-hydroxy-3-methylbut-2-enyl diphosphate</name>
        <dbReference type="ChEBI" id="CHEBI:128753"/>
    </ligand>
</feature>
<feature type="binding site" evidence="1">
    <location>
        <position position="269"/>
    </location>
    <ligand>
        <name>dimethylallyl diphosphate</name>
        <dbReference type="ChEBI" id="CHEBI:57623"/>
    </ligand>
</feature>
<feature type="binding site" evidence="1">
    <location>
        <position position="269"/>
    </location>
    <ligand>
        <name>isopentenyl diphosphate</name>
        <dbReference type="ChEBI" id="CHEBI:128769"/>
    </ligand>
</feature>
<accession>P58678</accession>
<protein>
    <recommendedName>
        <fullName evidence="1">4-hydroxy-3-methylbut-2-enyl diphosphate reductase</fullName>
        <shortName evidence="1">HMBPP reductase</shortName>
        <ecNumber evidence="1">1.17.7.4</ecNumber>
    </recommendedName>
</protein>
<dbReference type="EC" id="1.17.7.4" evidence="1"/>
<dbReference type="EMBL" id="AL513382">
    <property type="protein sequence ID" value="CAD01204.1"/>
    <property type="molecule type" value="Genomic_DNA"/>
</dbReference>
<dbReference type="EMBL" id="AE014613">
    <property type="protein sequence ID" value="AAO67784.1"/>
    <property type="molecule type" value="Genomic_DNA"/>
</dbReference>
<dbReference type="RefSeq" id="NP_454660.1">
    <property type="nucleotide sequence ID" value="NC_003198.1"/>
</dbReference>
<dbReference type="RefSeq" id="WP_001166426.1">
    <property type="nucleotide sequence ID" value="NZ_WSUR01000014.1"/>
</dbReference>
<dbReference type="SMR" id="P58678"/>
<dbReference type="STRING" id="220341.gene:17584106"/>
<dbReference type="KEGG" id="stt:t0051"/>
<dbReference type="KEGG" id="sty:STY0058"/>
<dbReference type="PATRIC" id="fig|220341.7.peg.58"/>
<dbReference type="eggNOG" id="COG0761">
    <property type="taxonomic scope" value="Bacteria"/>
</dbReference>
<dbReference type="HOGENOM" id="CLU_027486_1_0_6"/>
<dbReference type="OMA" id="SEMIHNP"/>
<dbReference type="OrthoDB" id="9804068at2"/>
<dbReference type="UniPathway" id="UPA00056">
    <property type="reaction ID" value="UER00097"/>
</dbReference>
<dbReference type="UniPathway" id="UPA00059">
    <property type="reaction ID" value="UER00105"/>
</dbReference>
<dbReference type="Proteomes" id="UP000000541">
    <property type="component" value="Chromosome"/>
</dbReference>
<dbReference type="Proteomes" id="UP000002670">
    <property type="component" value="Chromosome"/>
</dbReference>
<dbReference type="GO" id="GO:0051539">
    <property type="term" value="F:4 iron, 4 sulfur cluster binding"/>
    <property type="evidence" value="ECO:0007669"/>
    <property type="project" value="UniProtKB-UniRule"/>
</dbReference>
<dbReference type="GO" id="GO:0051745">
    <property type="term" value="F:4-hydroxy-3-methylbut-2-enyl diphosphate reductase activity"/>
    <property type="evidence" value="ECO:0007669"/>
    <property type="project" value="UniProtKB-UniRule"/>
</dbReference>
<dbReference type="GO" id="GO:0046872">
    <property type="term" value="F:metal ion binding"/>
    <property type="evidence" value="ECO:0007669"/>
    <property type="project" value="UniProtKB-KW"/>
</dbReference>
<dbReference type="GO" id="GO:0050992">
    <property type="term" value="P:dimethylallyl diphosphate biosynthetic process"/>
    <property type="evidence" value="ECO:0007669"/>
    <property type="project" value="UniProtKB-UniRule"/>
</dbReference>
<dbReference type="GO" id="GO:0019288">
    <property type="term" value="P:isopentenyl diphosphate biosynthetic process, methylerythritol 4-phosphate pathway"/>
    <property type="evidence" value="ECO:0007669"/>
    <property type="project" value="UniProtKB-UniRule"/>
</dbReference>
<dbReference type="GO" id="GO:0016114">
    <property type="term" value="P:terpenoid biosynthetic process"/>
    <property type="evidence" value="ECO:0007669"/>
    <property type="project" value="UniProtKB-UniRule"/>
</dbReference>
<dbReference type="CDD" id="cd13944">
    <property type="entry name" value="lytB_ispH"/>
    <property type="match status" value="1"/>
</dbReference>
<dbReference type="FunFam" id="3.40.1010.20:FF:000001">
    <property type="entry name" value="4-hydroxy-3-methylbut-2-enyl diphosphate reductase"/>
    <property type="match status" value="1"/>
</dbReference>
<dbReference type="FunFam" id="3.40.50.11270:FF:000001">
    <property type="entry name" value="4-hydroxy-3-methylbut-2-enyl diphosphate reductase"/>
    <property type="match status" value="1"/>
</dbReference>
<dbReference type="Gene3D" id="3.40.50.11270">
    <property type="match status" value="1"/>
</dbReference>
<dbReference type="Gene3D" id="3.40.1010.20">
    <property type="entry name" value="4-hydroxy-3-methylbut-2-enyl diphosphate reductase, catalytic domain"/>
    <property type="match status" value="2"/>
</dbReference>
<dbReference type="HAMAP" id="MF_00191">
    <property type="entry name" value="IspH"/>
    <property type="match status" value="1"/>
</dbReference>
<dbReference type="InterPro" id="IPR003451">
    <property type="entry name" value="LytB/IspH"/>
</dbReference>
<dbReference type="NCBIfam" id="TIGR00216">
    <property type="entry name" value="ispH_lytB"/>
    <property type="match status" value="1"/>
</dbReference>
<dbReference type="NCBIfam" id="NF002188">
    <property type="entry name" value="PRK01045.1-2"/>
    <property type="match status" value="1"/>
</dbReference>
<dbReference type="NCBIfam" id="NF002190">
    <property type="entry name" value="PRK01045.1-4"/>
    <property type="match status" value="1"/>
</dbReference>
<dbReference type="PANTHER" id="PTHR30426">
    <property type="entry name" value="4-HYDROXY-3-METHYLBUT-2-ENYL DIPHOSPHATE REDUCTASE"/>
    <property type="match status" value="1"/>
</dbReference>
<dbReference type="PANTHER" id="PTHR30426:SF0">
    <property type="entry name" value="4-HYDROXY-3-METHYLBUT-2-ENYL DIPHOSPHATE REDUCTASE"/>
    <property type="match status" value="1"/>
</dbReference>
<dbReference type="Pfam" id="PF02401">
    <property type="entry name" value="LYTB"/>
    <property type="match status" value="1"/>
</dbReference>
<proteinExistence type="inferred from homology"/>